<gene>
    <name evidence="5 10" type="primary">IGLV2-23</name>
</gene>
<organism>
    <name type="scientific">Homo sapiens</name>
    <name type="common">Human</name>
    <dbReference type="NCBI Taxonomy" id="9606"/>
    <lineage>
        <taxon>Eukaryota</taxon>
        <taxon>Metazoa</taxon>
        <taxon>Chordata</taxon>
        <taxon>Craniata</taxon>
        <taxon>Vertebrata</taxon>
        <taxon>Euteleostomi</taxon>
        <taxon>Mammalia</taxon>
        <taxon>Eutheria</taxon>
        <taxon>Euarchontoglires</taxon>
        <taxon>Primates</taxon>
        <taxon>Haplorrhini</taxon>
        <taxon>Catarrhini</taxon>
        <taxon>Hominidae</taxon>
        <taxon>Homo</taxon>
    </lineage>
</organism>
<proteinExistence type="evidence at protein level"/>
<sequence>MAWALLLLTLLTQDTGSWAQSALTQPASVSGSPGQSITISCTGTSSDVGSYNLVSWYQQHPGKAPKLMIYEGSKRPSGVSNRFSGSKSGNTASLTISGLQAEDEADYYCCSYA</sequence>
<reference key="1">
    <citation type="journal article" date="1999" name="Nature">
        <title>The DNA sequence of human chromosome 22.</title>
        <authorList>
            <person name="Dunham I."/>
            <person name="Hunt A.R."/>
            <person name="Collins J.E."/>
            <person name="Bruskiewich R."/>
            <person name="Beare D.M."/>
            <person name="Clamp M."/>
            <person name="Smink L.J."/>
            <person name="Ainscough R."/>
            <person name="Almeida J.P."/>
            <person name="Babbage A.K."/>
            <person name="Bagguley C."/>
            <person name="Bailey J."/>
            <person name="Barlow K.F."/>
            <person name="Bates K.N."/>
            <person name="Beasley O.P."/>
            <person name="Bird C.P."/>
            <person name="Blakey S.E."/>
            <person name="Bridgeman A.M."/>
            <person name="Buck D."/>
            <person name="Burgess J."/>
            <person name="Burrill W.D."/>
            <person name="Burton J."/>
            <person name="Carder C."/>
            <person name="Carter N.P."/>
            <person name="Chen Y."/>
            <person name="Clark G."/>
            <person name="Clegg S.M."/>
            <person name="Cobley V.E."/>
            <person name="Cole C.G."/>
            <person name="Collier R.E."/>
            <person name="Connor R."/>
            <person name="Conroy D."/>
            <person name="Corby N.R."/>
            <person name="Coville G.J."/>
            <person name="Cox A.V."/>
            <person name="Davis J."/>
            <person name="Dawson E."/>
            <person name="Dhami P.D."/>
            <person name="Dockree C."/>
            <person name="Dodsworth S.J."/>
            <person name="Durbin R.M."/>
            <person name="Ellington A.G."/>
            <person name="Evans K.L."/>
            <person name="Fey J.M."/>
            <person name="Fleming K."/>
            <person name="French L."/>
            <person name="Garner A.A."/>
            <person name="Gilbert J.G.R."/>
            <person name="Goward M.E."/>
            <person name="Grafham D.V."/>
            <person name="Griffiths M.N.D."/>
            <person name="Hall C."/>
            <person name="Hall R.E."/>
            <person name="Hall-Tamlyn G."/>
            <person name="Heathcott R.W."/>
            <person name="Ho S."/>
            <person name="Holmes S."/>
            <person name="Hunt S.E."/>
            <person name="Jones M.C."/>
            <person name="Kershaw J."/>
            <person name="Kimberley A.M."/>
            <person name="King A."/>
            <person name="Laird G.K."/>
            <person name="Langford C.F."/>
            <person name="Leversha M.A."/>
            <person name="Lloyd C."/>
            <person name="Lloyd D.M."/>
            <person name="Martyn I.D."/>
            <person name="Mashreghi-Mohammadi M."/>
            <person name="Matthews L.H."/>
            <person name="Mccann O.T."/>
            <person name="Mcclay J."/>
            <person name="Mclaren S."/>
            <person name="McMurray A.A."/>
            <person name="Milne S.A."/>
            <person name="Mortimore B.J."/>
            <person name="Odell C.N."/>
            <person name="Pavitt R."/>
            <person name="Pearce A.V."/>
            <person name="Pearson D."/>
            <person name="Phillimore B.J.C.T."/>
            <person name="Phillips S.H."/>
            <person name="Plumb R.W."/>
            <person name="Ramsay H."/>
            <person name="Ramsey Y."/>
            <person name="Rogers L."/>
            <person name="Ross M.T."/>
            <person name="Scott C.E."/>
            <person name="Sehra H.K."/>
            <person name="Skuce C.D."/>
            <person name="Smalley S."/>
            <person name="Smith M.L."/>
            <person name="Soderlund C."/>
            <person name="Spragon L."/>
            <person name="Steward C.A."/>
            <person name="Sulston J.E."/>
            <person name="Swann R.M."/>
            <person name="Vaudin M."/>
            <person name="Wall M."/>
            <person name="Wallis J.M."/>
            <person name="Whiteley M.N."/>
            <person name="Willey D.L."/>
            <person name="Williams L."/>
            <person name="Williams S.A."/>
            <person name="Williamson H."/>
            <person name="Wilmer T.E."/>
            <person name="Wilming L."/>
            <person name="Wright C.L."/>
            <person name="Hubbard T."/>
            <person name="Bentley D.R."/>
            <person name="Beck S."/>
            <person name="Rogers J."/>
            <person name="Shimizu N."/>
            <person name="Minoshima S."/>
            <person name="Kawasaki K."/>
            <person name="Sasaki T."/>
            <person name="Asakawa S."/>
            <person name="Kudoh J."/>
            <person name="Shintani A."/>
            <person name="Shibuya K."/>
            <person name="Yoshizaki Y."/>
            <person name="Aoki N."/>
            <person name="Mitsuyama S."/>
            <person name="Roe B.A."/>
            <person name="Chen F."/>
            <person name="Chu L."/>
            <person name="Crabtree J."/>
            <person name="Deschamps S."/>
            <person name="Do A."/>
            <person name="Do T."/>
            <person name="Dorman A."/>
            <person name="Fang F."/>
            <person name="Fu Y."/>
            <person name="Hu P."/>
            <person name="Hua A."/>
            <person name="Kenton S."/>
            <person name="Lai H."/>
            <person name="Lao H.I."/>
            <person name="Lewis J."/>
            <person name="Lewis S."/>
            <person name="Lin S.-P."/>
            <person name="Loh P."/>
            <person name="Malaj E."/>
            <person name="Nguyen T."/>
            <person name="Pan H."/>
            <person name="Phan S."/>
            <person name="Qi S."/>
            <person name="Qian Y."/>
            <person name="Ray L."/>
            <person name="Ren Q."/>
            <person name="Shaull S."/>
            <person name="Sloan D."/>
            <person name="Song L."/>
            <person name="Wang Q."/>
            <person name="Wang Y."/>
            <person name="Wang Z."/>
            <person name="White J."/>
            <person name="Willingham D."/>
            <person name="Wu H."/>
            <person name="Yao Z."/>
            <person name="Zhan M."/>
            <person name="Zhang G."/>
            <person name="Chissoe S."/>
            <person name="Murray J."/>
            <person name="Miller N."/>
            <person name="Minx P."/>
            <person name="Fulton R."/>
            <person name="Johnson D."/>
            <person name="Bemis G."/>
            <person name="Bentley D."/>
            <person name="Bradshaw H."/>
            <person name="Bourne S."/>
            <person name="Cordes M."/>
            <person name="Du Z."/>
            <person name="Fulton L."/>
            <person name="Goela D."/>
            <person name="Graves T."/>
            <person name="Hawkins J."/>
            <person name="Hinds K."/>
            <person name="Kemp K."/>
            <person name="Latreille P."/>
            <person name="Layman D."/>
            <person name="Ozersky P."/>
            <person name="Rohlfing T."/>
            <person name="Scheet P."/>
            <person name="Walker C."/>
            <person name="Wamsley A."/>
            <person name="Wohldmann P."/>
            <person name="Pepin K."/>
            <person name="Nelson J."/>
            <person name="Korf I."/>
            <person name="Bedell J.A."/>
            <person name="Hillier L.W."/>
            <person name="Mardis E."/>
            <person name="Waterston R."/>
            <person name="Wilson R."/>
            <person name="Emanuel B.S."/>
            <person name="Shaikh T."/>
            <person name="Kurahashi H."/>
            <person name="Saitta S."/>
            <person name="Budarf M.L."/>
            <person name="McDermid H.E."/>
            <person name="Johnson A."/>
            <person name="Wong A.C.C."/>
            <person name="Morrow B.E."/>
            <person name="Edelmann L."/>
            <person name="Kim U.J."/>
            <person name="Shizuya H."/>
            <person name="Simon M.I."/>
            <person name="Dumanski J.P."/>
            <person name="Peyrard M."/>
            <person name="Kedra D."/>
            <person name="Seroussi E."/>
            <person name="Fransson I."/>
            <person name="Tapia I."/>
            <person name="Bruder C.E."/>
            <person name="O'Brien K.P."/>
            <person name="Wilkinson P."/>
            <person name="Bodenteich A."/>
            <person name="Hartman K."/>
            <person name="Hu X."/>
            <person name="Khan A.S."/>
            <person name="Lane L."/>
            <person name="Tilahun Y."/>
            <person name="Wright H."/>
        </authorList>
    </citation>
    <scope>NUCLEOTIDE SEQUENCE [LARGE SCALE GENOMIC DNA] (IMGT ALLELE IGLV2-23*01 AND IMGT ALLELE IGLV2-23*03)</scope>
</reference>
<reference key="2">
    <citation type="journal article" date="1972" name="Eur. J. Biochem.">
        <title>The primary structure of a monoclonal human lambda-type immunoglobulin L-chain of subgroup II (Bence-Jones protein NEI).</title>
        <authorList>
            <person name="Garver F.A."/>
            <person name="Hilschmann N."/>
        </authorList>
    </citation>
    <scope>PROTEIN SEQUENCE OF 20-113</scope>
    <scope>PYROGLUTAMATE FORMATION AT GLN-20</scope>
</reference>
<reference key="3">
    <citation type="journal article" date="2001" name="Exp. Clin. Immunogenet.">
        <title>Nomenclature of the human immunoglobulin lambda (IGL) genes.</title>
        <authorList>
            <person name="Lefranc M.P."/>
        </authorList>
    </citation>
    <scope>NOMENCLATURE</scope>
</reference>
<reference key="4">
    <citation type="book" date="2001" name="The Immunoglobulin FactsBook.">
        <title>The Immunoglobulin FactsBook.</title>
        <editorList>
            <person name="Lefranc M.P."/>
            <person name="Lefranc G."/>
        </editorList>
        <authorList>
            <person name="Lefranc M.P."/>
            <person name="Lefranc G."/>
        </authorList>
    </citation>
    <scope>NOMENCLATURE</scope>
</reference>
<reference key="5">
    <citation type="journal article" date="2007" name="Annu. Rev. Genet.">
        <title>Immunoglobulin somatic hypermutation.</title>
        <authorList>
            <person name="Teng G."/>
            <person name="Papavasiliou F.N."/>
        </authorList>
    </citation>
    <scope>REVIEW ON SOMATIC HYPERMUTATION</scope>
</reference>
<reference key="6">
    <citation type="journal article" date="2010" name="J. Allergy Clin. Immunol.">
        <title>Structure and function of immunoglobulins.</title>
        <authorList>
            <person name="Schroeder H.W. Jr."/>
            <person name="Cavacini L."/>
        </authorList>
    </citation>
    <scope>REVIEW ON IMMUNOGLOBULINS</scope>
</reference>
<reference key="7">
    <citation type="journal article" date="2012" name="Nat. Rev. Immunol.">
        <title>Molecular programming of B cell memory.</title>
        <authorList>
            <person name="McHeyzer-Williams M."/>
            <person name="Okitsu S."/>
            <person name="Wang N."/>
            <person name="McHeyzer-Williams L."/>
        </authorList>
    </citation>
    <scope>REVIEW ON FUNCTION</scope>
</reference>
<reference key="8">
    <citation type="journal article" date="2014" name="Front. Immunol.">
        <title>Immunoglobulin and T Cell Receptor Genes: IMGT((R)) and the Birth and Rise of Immunoinformatics.</title>
        <authorList>
            <person name="Lefranc M.P."/>
        </authorList>
    </citation>
    <scope>NOMENCLATURE</scope>
</reference>
<protein>
    <recommendedName>
        <fullName evidence="5 10">Immunoglobulin lambda variable 2-23</fullName>
    </recommendedName>
    <alternativeName>
        <fullName evidence="12">Ig lambda chain V-II region NEI</fullName>
    </alternativeName>
</protein>
<comment type="function">
    <text evidence="6 7 8 9">V region of the variable domain of immunoglobulin light chains that participates in the antigen recognition (PubMed:24600447). Immunoglobulins, also known as antibodies, are membrane-bound or secreted glycoproteins produced by B lymphocytes. In the recognition phase of humoral immunity, the membrane-bound immunoglobulins serve as receptors which, upon binding of a specific antigen, trigger the clonal expansion and differentiation of B lymphocytes into immunoglobulins-secreting plasma cells. Secreted immunoglobulins mediate the effector phase of humoral immunity, which results in the elimination of bound antigens (PubMed:20176268, PubMed:22158414). The antigen binding site is formed by the variable domain of one heavy chain, together with that of its associated light chain. Thus, each immunoglobulin has two antigen binding sites with remarkable affinity for a particular antigen. The variable domains are assembled by a process called V-(D)-J rearrangement and can then be subjected to somatic hypermutations which, after exposure to antigen and selection, allow affinity maturation for a particular antigen (PubMed:17576170, PubMed:20176268).</text>
</comment>
<comment type="subunit">
    <text evidence="7">Immunoglobulins are composed of two identical heavy chains and two identical light chains; disulfide-linked.</text>
</comment>
<comment type="subcellular location">
    <subcellularLocation>
        <location evidence="7 8">Secreted</location>
    </subcellularLocation>
    <subcellularLocation>
        <location evidence="7 8">Cell membrane</location>
    </subcellularLocation>
</comment>
<comment type="polymorphism">
    <text>There are several alleles. The sequence shown is that of IMGT allele IGLV2-23*01 and IMGT allele IGLV2-23*03.</text>
</comment>
<comment type="caution">
    <text evidence="11">For an example of a full-length immunoglobulin lambda light chain see AC P0DOX8.</text>
</comment>
<evidence type="ECO:0000250" key="1">
    <source>
        <dbReference type="UniProtKB" id="P01721"/>
    </source>
</evidence>
<evidence type="ECO:0000255" key="2">
    <source>
        <dbReference type="PROSITE-ProRule" id="PRU00114"/>
    </source>
</evidence>
<evidence type="ECO:0000256" key="3">
    <source>
        <dbReference type="SAM" id="MobiDB-lite"/>
    </source>
</evidence>
<evidence type="ECO:0000269" key="4">
    <source>
    </source>
</evidence>
<evidence type="ECO:0000303" key="5">
    <source>
    </source>
</evidence>
<evidence type="ECO:0000303" key="6">
    <source>
    </source>
</evidence>
<evidence type="ECO:0000303" key="7">
    <source>
    </source>
</evidence>
<evidence type="ECO:0000303" key="8">
    <source>
    </source>
</evidence>
<evidence type="ECO:0000303" key="9">
    <source>
    </source>
</evidence>
<evidence type="ECO:0000303" key="10">
    <source ref="4"/>
</evidence>
<evidence type="ECO:0000305" key="11"/>
<evidence type="ECO:0000305" key="12">
    <source>
    </source>
</evidence>
<accession>P01705</accession>
<accession>A0A075B6J5</accession>
<name>LV223_HUMAN</name>
<keyword id="KW-1064">Adaptive immunity</keyword>
<keyword id="KW-1003">Cell membrane</keyword>
<keyword id="KW-0903">Direct protein sequencing</keyword>
<keyword id="KW-1015">Disulfide bond</keyword>
<keyword id="KW-0391">Immunity</keyword>
<keyword id="KW-1280">Immunoglobulin</keyword>
<keyword id="KW-0393">Immunoglobulin domain</keyword>
<keyword id="KW-0472">Membrane</keyword>
<keyword id="KW-1267">Proteomics identification</keyword>
<keyword id="KW-0873">Pyrrolidone carboxylic acid</keyword>
<keyword id="KW-1185">Reference proteome</keyword>
<keyword id="KW-0964">Secreted</keyword>
<keyword id="KW-0732">Signal</keyword>
<dbReference type="EMBL" id="AC244250">
    <property type="status" value="NOT_ANNOTATED_CDS"/>
    <property type="molecule type" value="Genomic_DNA"/>
</dbReference>
<dbReference type="PIR" id="A01970">
    <property type="entry name" value="L2HUNI"/>
</dbReference>
<dbReference type="EMDB" id="EMD-0401"/>
<dbReference type="EMDB" id="EMD-0402"/>
<dbReference type="EMDB" id="EMD-14474"/>
<dbReference type="EMDB" id="EMD-18649"/>
<dbReference type="EMDB" id="EMD-18807"/>
<dbReference type="EMDB" id="EMD-26653"/>
<dbReference type="EMDB" id="EMD-27058"/>
<dbReference type="EMDB" id="EMD-28558"/>
<dbReference type="EMDB" id="EMD-28559"/>
<dbReference type="EMDB" id="EMD-32786"/>
<dbReference type="EMDB" id="EMD-32787"/>
<dbReference type="EMDB" id="EMD-34130"/>
<dbReference type="EMDB" id="EMD-34131"/>
<dbReference type="EMDB" id="EMD-34135"/>
<dbReference type="EMDB" id="EMD-40275"/>
<dbReference type="EMDB" id="EMD-40277"/>
<dbReference type="EMDB" id="EMD-40278"/>
<dbReference type="EMDB" id="EMD-40280"/>
<dbReference type="EMDB" id="EMD-40282"/>
<dbReference type="EMDB" id="EMD-40283"/>
<dbReference type="EMDB" id="EMD-40284"/>
<dbReference type="EMDB" id="EMD-40285"/>
<dbReference type="EMDB" id="EMD-40286"/>
<dbReference type="EMDB" id="EMD-40287"/>
<dbReference type="EMDB" id="EMD-40288"/>
<dbReference type="EMDB" id="EMD-40289"/>
<dbReference type="EMDB" id="EMD-40290"/>
<dbReference type="EMDB" id="EMD-40291"/>
<dbReference type="EMDB" id="EMD-43225"/>
<dbReference type="SMR" id="P01705"/>
<dbReference type="FunCoup" id="P01705">
    <property type="interactions" value="379"/>
</dbReference>
<dbReference type="IMGT_GENE-DB" id="IGLV2-23"/>
<dbReference type="GlyGen" id="P01705">
    <property type="glycosylation" value="1 site, 1 O-linked glycan (1 site)"/>
</dbReference>
<dbReference type="BioMuta" id="IGLV2-23"/>
<dbReference type="DMDM" id="126554"/>
<dbReference type="jPOST" id="P01705"/>
<dbReference type="MassIVE" id="P01705"/>
<dbReference type="Ensembl" id="ENST00000390306.2">
    <property type="protein sequence ID" value="ENSP00000374841.2"/>
    <property type="gene ID" value="ENSG00000211660.3"/>
</dbReference>
<dbReference type="AGR" id="HGNC:5890"/>
<dbReference type="GeneCards" id="IGLV2-23"/>
<dbReference type="HGNC" id="HGNC:5890">
    <property type="gene designation" value="IGLV2-23"/>
</dbReference>
<dbReference type="HPA" id="ENSG00000211660">
    <property type="expression patterns" value="Tissue enhanced (intestine, lymphoid tissue, stomach)"/>
</dbReference>
<dbReference type="neXtProt" id="NX_P01705"/>
<dbReference type="OpenTargets" id="ENSG00000211660"/>
<dbReference type="VEuPathDB" id="HostDB:ENSG00000211660"/>
<dbReference type="GeneTree" id="ENSGT00940000154179"/>
<dbReference type="InParanoid" id="P01705"/>
<dbReference type="OMA" id="YNYVSWH"/>
<dbReference type="OrthoDB" id="9838202at2759"/>
<dbReference type="PAN-GO" id="P01705">
    <property type="GO annotations" value="3 GO annotations based on evolutionary models"/>
</dbReference>
<dbReference type="PhylomeDB" id="P01705"/>
<dbReference type="PathwayCommons" id="P01705"/>
<dbReference type="Reactome" id="R-HSA-166663">
    <property type="pathway name" value="Initial triggering of complement"/>
</dbReference>
<dbReference type="Reactome" id="R-HSA-173623">
    <property type="pathway name" value="Classical antibody-mediated complement activation"/>
</dbReference>
<dbReference type="Reactome" id="R-HSA-198933">
    <property type="pathway name" value="Immunoregulatory interactions between a Lymphoid and a non-Lymphoid cell"/>
</dbReference>
<dbReference type="Reactome" id="R-HSA-202733">
    <property type="pathway name" value="Cell surface interactions at the vascular wall"/>
</dbReference>
<dbReference type="Reactome" id="R-HSA-2029481">
    <property type="pathway name" value="FCGR activation"/>
</dbReference>
<dbReference type="Reactome" id="R-HSA-2029482">
    <property type="pathway name" value="Regulation of actin dynamics for phagocytic cup formation"/>
</dbReference>
<dbReference type="Reactome" id="R-HSA-2029485">
    <property type="pathway name" value="Role of phospholipids in phagocytosis"/>
</dbReference>
<dbReference type="Reactome" id="R-HSA-2168880">
    <property type="pathway name" value="Scavenging of heme from plasma"/>
</dbReference>
<dbReference type="Reactome" id="R-HSA-2454202">
    <property type="pathway name" value="Fc epsilon receptor (FCERI) signaling"/>
</dbReference>
<dbReference type="Reactome" id="R-HSA-2730905">
    <property type="pathway name" value="Role of LAT2/NTAL/LAB on calcium mobilization"/>
</dbReference>
<dbReference type="Reactome" id="R-HSA-2871796">
    <property type="pathway name" value="FCERI mediated MAPK activation"/>
</dbReference>
<dbReference type="Reactome" id="R-HSA-2871809">
    <property type="pathway name" value="FCERI mediated Ca+2 mobilization"/>
</dbReference>
<dbReference type="Reactome" id="R-HSA-2871837">
    <property type="pathway name" value="FCERI mediated NF-kB activation"/>
</dbReference>
<dbReference type="Reactome" id="R-HSA-5690714">
    <property type="pathway name" value="CD22 mediated BCR regulation"/>
</dbReference>
<dbReference type="Reactome" id="R-HSA-9664323">
    <property type="pathway name" value="FCGR3A-mediated IL10 synthesis"/>
</dbReference>
<dbReference type="Reactome" id="R-HSA-9664422">
    <property type="pathway name" value="FCGR3A-mediated phagocytosis"/>
</dbReference>
<dbReference type="Reactome" id="R-HSA-9679191">
    <property type="pathway name" value="Potential therapeutics for SARS"/>
</dbReference>
<dbReference type="Reactome" id="R-HSA-977606">
    <property type="pathway name" value="Regulation of Complement cascade"/>
</dbReference>
<dbReference type="Reactome" id="R-HSA-983695">
    <property type="pathway name" value="Antigen activates B Cell Receptor (BCR) leading to generation of second messengers"/>
</dbReference>
<dbReference type="ChiTaRS" id="IGLV2-23">
    <property type="organism name" value="human"/>
</dbReference>
<dbReference type="Pharos" id="P01705">
    <property type="development level" value="Tdark"/>
</dbReference>
<dbReference type="PRO" id="PR:P01705"/>
<dbReference type="Proteomes" id="UP000005640">
    <property type="component" value="Chromosome 22"/>
</dbReference>
<dbReference type="RNAct" id="P01705">
    <property type="molecule type" value="protein"/>
</dbReference>
<dbReference type="Bgee" id="ENSG00000211660">
    <property type="expression patterns" value="Expressed in duodenum and 92 other cell types or tissues"/>
</dbReference>
<dbReference type="GO" id="GO:0005576">
    <property type="term" value="C:extracellular region"/>
    <property type="evidence" value="ECO:0000304"/>
    <property type="project" value="Reactome"/>
</dbReference>
<dbReference type="GO" id="GO:0019814">
    <property type="term" value="C:immunoglobulin complex"/>
    <property type="evidence" value="ECO:0000318"/>
    <property type="project" value="GO_Central"/>
</dbReference>
<dbReference type="GO" id="GO:0005886">
    <property type="term" value="C:plasma membrane"/>
    <property type="evidence" value="ECO:0000304"/>
    <property type="project" value="Reactome"/>
</dbReference>
<dbReference type="GO" id="GO:0003823">
    <property type="term" value="F:antigen binding"/>
    <property type="evidence" value="ECO:0000303"/>
    <property type="project" value="UniProtKB"/>
</dbReference>
<dbReference type="GO" id="GO:0002250">
    <property type="term" value="P:adaptive immune response"/>
    <property type="evidence" value="ECO:0007669"/>
    <property type="project" value="UniProtKB-KW"/>
</dbReference>
<dbReference type="GO" id="GO:0006955">
    <property type="term" value="P:immune response"/>
    <property type="evidence" value="ECO:0000318"/>
    <property type="project" value="GO_Central"/>
</dbReference>
<dbReference type="FunFam" id="2.60.40.10:FF:000442">
    <property type="entry name" value="Immunoglobulin lambda variable 2-8"/>
    <property type="match status" value="1"/>
</dbReference>
<dbReference type="Gene3D" id="2.60.40.10">
    <property type="entry name" value="Immunoglobulins"/>
    <property type="match status" value="1"/>
</dbReference>
<dbReference type="InterPro" id="IPR007110">
    <property type="entry name" value="Ig-like_dom"/>
</dbReference>
<dbReference type="InterPro" id="IPR036179">
    <property type="entry name" value="Ig-like_dom_sf"/>
</dbReference>
<dbReference type="InterPro" id="IPR013783">
    <property type="entry name" value="Ig-like_fold"/>
</dbReference>
<dbReference type="InterPro" id="IPR003599">
    <property type="entry name" value="Ig_sub"/>
</dbReference>
<dbReference type="InterPro" id="IPR013106">
    <property type="entry name" value="Ig_V-set"/>
</dbReference>
<dbReference type="InterPro" id="IPR050150">
    <property type="entry name" value="IgV_Light_Chain"/>
</dbReference>
<dbReference type="PANTHER" id="PTHR23267">
    <property type="entry name" value="IMMUNOGLOBULIN LIGHT CHAIN"/>
    <property type="match status" value="1"/>
</dbReference>
<dbReference type="Pfam" id="PF07686">
    <property type="entry name" value="V-set"/>
    <property type="match status" value="1"/>
</dbReference>
<dbReference type="SMART" id="SM00409">
    <property type="entry name" value="IG"/>
    <property type="match status" value="1"/>
</dbReference>
<dbReference type="SMART" id="SM00406">
    <property type="entry name" value="IGv"/>
    <property type="match status" value="1"/>
</dbReference>
<dbReference type="SUPFAM" id="SSF48726">
    <property type="entry name" value="Immunoglobulin"/>
    <property type="match status" value="1"/>
</dbReference>
<dbReference type="PROSITE" id="PS50835">
    <property type="entry name" value="IG_LIKE"/>
    <property type="match status" value="1"/>
</dbReference>
<feature type="signal peptide" evidence="4">
    <location>
        <begin position="1"/>
        <end position="19"/>
    </location>
</feature>
<feature type="chain" id="PRO_0000059831" description="Immunoglobulin lambda variable 2-23" evidence="4">
    <location>
        <begin position="20"/>
        <end position="113"/>
    </location>
</feature>
<feature type="domain" description="Ig-like" evidence="2">
    <location>
        <begin position="20"/>
        <end position="113" status="greater than"/>
    </location>
</feature>
<feature type="region of interest" description="Framework-1" evidence="1">
    <location>
        <begin position="20"/>
        <end position="44"/>
    </location>
</feature>
<feature type="region of interest" description="Complementarity-determining-1" evidence="1">
    <location>
        <begin position="45"/>
        <end position="53"/>
    </location>
</feature>
<feature type="region of interest" description="Framework-2" evidence="1">
    <location>
        <begin position="54"/>
        <end position="70"/>
    </location>
</feature>
<feature type="region of interest" description="Complementarity-determining-2" evidence="1">
    <location>
        <begin position="71"/>
        <end position="73"/>
    </location>
</feature>
<feature type="region of interest" description="Disordered" evidence="3">
    <location>
        <begin position="73"/>
        <end position="92"/>
    </location>
</feature>
<feature type="region of interest" description="Framework-3" evidence="1">
    <location>
        <begin position="74"/>
        <end position="109"/>
    </location>
</feature>
<feature type="region of interest" description="Complementarity-determining-3" evidence="1">
    <location>
        <begin position="110"/>
        <end position="113" status="greater than"/>
    </location>
</feature>
<feature type="compositionally biased region" description="Polar residues" evidence="3">
    <location>
        <begin position="78"/>
        <end position="92"/>
    </location>
</feature>
<feature type="modified residue" description="Pyrrolidone carboxylic acid" evidence="4">
    <location>
        <position position="20"/>
    </location>
</feature>
<feature type="disulfide bond" evidence="2">
    <location>
        <begin position="41"/>
        <end position="109"/>
    </location>
</feature>
<feature type="sequence conflict" description="In Ref. 2; AA sequence." evidence="11" ref="2">
    <original>S</original>
    <variation>T</variation>
    <location>
        <position position="45"/>
    </location>
</feature>
<feature type="sequence conflict" description="In Ref. 2; AA sequence." evidence="11" ref="2">
    <original>L</original>
    <variation>F</variation>
    <location>
        <position position="53"/>
    </location>
</feature>
<feature type="sequence conflict" description="In Ref. 2; AA sequence." evidence="11" ref="2">
    <original>H</original>
    <variation>N</variation>
    <location>
        <position position="60"/>
    </location>
</feature>
<feature type="sequence conflict" description="In Ref. 2; AA sequence." evidence="11" ref="2">
    <original>S</original>
    <variation>N</variation>
    <location>
        <position position="73"/>
    </location>
</feature>
<feature type="sequence conflict" description="In Ref. 2; AA sequence." evidence="11" ref="2">
    <original>N</original>
    <variation>K</variation>
    <location>
        <position position="90"/>
    </location>
</feature>
<feature type="sequence conflict" description="In Ref. 2; AA sequence." evidence="11" ref="2">
    <original>A</original>
    <variation>V</variation>
    <location>
        <position position="101"/>
    </location>
</feature>
<feature type="non-terminal residue">
    <location>
        <position position="113"/>
    </location>
</feature>